<evidence type="ECO:0000269" key="1">
    <source>
    </source>
</evidence>
<evidence type="ECO:0000269" key="2">
    <source>
    </source>
</evidence>
<evidence type="ECO:0000305" key="3"/>
<evidence type="ECO:0007829" key="4">
    <source>
        <dbReference type="PDB" id="5CPC"/>
    </source>
</evidence>
<evidence type="ECO:0007829" key="5">
    <source>
        <dbReference type="PDB" id="7BWT"/>
    </source>
</evidence>
<dbReference type="EMBL" id="M23007">
    <property type="protein sequence ID" value="AAA27049.1"/>
    <property type="molecule type" value="Genomic_DNA"/>
</dbReference>
<dbReference type="EMBL" id="AE006468">
    <property type="protein sequence ID" value="AAL21825.1"/>
    <property type="molecule type" value="Genomic_DNA"/>
</dbReference>
<dbReference type="RefSeq" id="NP_461866.1">
    <property type="nucleotide sequence ID" value="NC_003197.2"/>
</dbReference>
<dbReference type="RefSeq" id="WP_001145543.1">
    <property type="nucleotide sequence ID" value="NC_003197.2"/>
</dbReference>
<dbReference type="PDB" id="5CPC">
    <property type="method" value="X-ray"/>
    <property type="resolution" value="2.15 A"/>
    <property type="chains" value="A/B=1-317"/>
</dbReference>
<dbReference type="PDB" id="7BWT">
    <property type="method" value="X-ray"/>
    <property type="resolution" value="2.30 A"/>
    <property type="chains" value="A=2-317"/>
</dbReference>
<dbReference type="PDBsum" id="5CPC"/>
<dbReference type="PDBsum" id="7BWT"/>
<dbReference type="SMR" id="P40722"/>
<dbReference type="STRING" id="99287.STM2945"/>
<dbReference type="PaxDb" id="99287-STM2945"/>
<dbReference type="GeneID" id="1254468"/>
<dbReference type="KEGG" id="stm:STM2945"/>
<dbReference type="PATRIC" id="fig|99287.12.peg.3106"/>
<dbReference type="HOGENOM" id="CLU_072577_0_0_6"/>
<dbReference type="OMA" id="MCCINNV"/>
<dbReference type="PhylomeDB" id="P40722"/>
<dbReference type="BioCyc" id="SENT99287:STM2945-MONOMER"/>
<dbReference type="EvolutionaryTrace" id="P40722"/>
<dbReference type="Proteomes" id="UP000001014">
    <property type="component" value="Chromosome"/>
</dbReference>
<dbReference type="GO" id="GO:0005576">
    <property type="term" value="C:extracellular region"/>
    <property type="evidence" value="ECO:0007669"/>
    <property type="project" value="UniProtKB-SubCell"/>
</dbReference>
<dbReference type="GO" id="GO:0044164">
    <property type="term" value="C:host cell cytosol"/>
    <property type="evidence" value="ECO:0000314"/>
    <property type="project" value="UniProtKB"/>
</dbReference>
<dbReference type="GO" id="GO:0033644">
    <property type="term" value="C:host cell membrane"/>
    <property type="evidence" value="ECO:0000314"/>
    <property type="project" value="UniProtKB"/>
</dbReference>
<dbReference type="GO" id="GO:0020002">
    <property type="term" value="C:host cell plasma membrane"/>
    <property type="evidence" value="ECO:0007669"/>
    <property type="project" value="UniProtKB-SubCell"/>
</dbReference>
<dbReference type="GO" id="GO:0016020">
    <property type="term" value="C:membrane"/>
    <property type="evidence" value="ECO:0007669"/>
    <property type="project" value="UniProtKB-KW"/>
</dbReference>
<dbReference type="GO" id="GO:0030254">
    <property type="term" value="P:protein secretion by the type III secretion system"/>
    <property type="evidence" value="ECO:0000315"/>
    <property type="project" value="AgBase"/>
</dbReference>
<dbReference type="Gene3D" id="3.30.2440.10">
    <property type="entry name" value="Secreted effector protein SifA"/>
    <property type="match status" value="1"/>
</dbReference>
<dbReference type="InterPro" id="IPR022747">
    <property type="entry name" value="SopD"/>
</dbReference>
<dbReference type="NCBIfam" id="NF011906">
    <property type="entry name" value="PRK15379.1"/>
    <property type="match status" value="1"/>
</dbReference>
<dbReference type="Pfam" id="PF11047">
    <property type="entry name" value="SopD"/>
    <property type="match status" value="1"/>
</dbReference>
<protein>
    <recommendedName>
        <fullName>Secreted effector protein SopD</fullName>
    </recommendedName>
    <alternativeName>
        <fullName>Salmonella outer protein D</fullName>
    </alternativeName>
</protein>
<proteinExistence type="evidence at protein level"/>
<name>SOPD_SALTY</name>
<organism>
    <name type="scientific">Salmonella typhimurium (strain LT2 / SGSC1412 / ATCC 700720)</name>
    <dbReference type="NCBI Taxonomy" id="99287"/>
    <lineage>
        <taxon>Bacteria</taxon>
        <taxon>Pseudomonadati</taxon>
        <taxon>Pseudomonadota</taxon>
        <taxon>Gammaproteobacteria</taxon>
        <taxon>Enterobacterales</taxon>
        <taxon>Enterobacteriaceae</taxon>
        <taxon>Salmonella</taxon>
    </lineage>
</organism>
<accession>P40722</accession>
<reference key="1">
    <citation type="journal article" date="1989" name="J. Biol. Chem.">
        <title>Characterization of the cysJIH regions of Salmonella typhimurium and Escherichia coli B. DNA sequences of cysI and cysH and a model for the siroheme-Fe4S4 active center of sulfite reductase hemoprotein based on amino acid homology with spinach nitrite reductase.</title>
        <authorList>
            <person name="Ostrowski J."/>
            <person name="Wu J.-Y."/>
            <person name="Rueger D.C."/>
            <person name="Miller B.E."/>
            <person name="Siegel L.M."/>
            <person name="Kredich N.M."/>
        </authorList>
    </citation>
    <scope>NUCLEOTIDE SEQUENCE [GENOMIC DNA]</scope>
    <source>
        <strain>LT2</strain>
    </source>
</reference>
<reference key="2">
    <citation type="journal article" date="2001" name="Nature">
        <title>Complete genome sequence of Salmonella enterica serovar Typhimurium LT2.</title>
        <authorList>
            <person name="McClelland M."/>
            <person name="Sanderson K.E."/>
            <person name="Spieth J."/>
            <person name="Clifton S.W."/>
            <person name="Latreille P."/>
            <person name="Courtney L."/>
            <person name="Porwollik S."/>
            <person name="Ali J."/>
            <person name="Dante M."/>
            <person name="Du F."/>
            <person name="Hou S."/>
            <person name="Layman D."/>
            <person name="Leonard S."/>
            <person name="Nguyen C."/>
            <person name="Scott K."/>
            <person name="Holmes A."/>
            <person name="Grewal N."/>
            <person name="Mulvaney E."/>
            <person name="Ryan E."/>
            <person name="Sun H."/>
            <person name="Florea L."/>
            <person name="Miller W."/>
            <person name="Stoneking T."/>
            <person name="Nhan M."/>
            <person name="Waterston R."/>
            <person name="Wilson R.K."/>
        </authorList>
    </citation>
    <scope>NUCLEOTIDE SEQUENCE [LARGE SCALE GENOMIC DNA]</scope>
    <source>
        <strain>LT2 / SGSC1412 / ATCC 700720</strain>
    </source>
</reference>
<reference key="3">
    <citation type="journal article" date="2003" name="Traffic">
        <title>SopD2 is a novel type III secreted effector of Salmonella typhimurium that targets late endocytic compartments upon delivery into host cells.</title>
        <authorList>
            <person name="Brumell J.H."/>
            <person name="Kujat-Choy S."/>
            <person name="Brown N.F."/>
            <person name="Vallance B.A."/>
            <person name="Knodler L.A."/>
            <person name="Finlay B.B."/>
        </authorList>
    </citation>
    <scope>SUBCELLULAR LOCATION</scope>
    <source>
        <strain>SL1344</strain>
    </source>
</reference>
<reference key="4">
    <citation type="journal article" date="2004" name="Mol. Microbiol.">
        <title>The related effector proteins SopD and SopD2 from Salmonella enterica serovar Typhimurium contribute to virulence during systemic infection of mice.</title>
        <authorList>
            <person name="Jiang X."/>
            <person name="Rossanese O.W."/>
            <person name="Brown N.F."/>
            <person name="Kujat-Choy S."/>
            <person name="Galan J.E."/>
            <person name="Finlay B.B."/>
            <person name="Brumell J.H."/>
        </authorList>
    </citation>
    <scope>FUNCTION</scope>
    <scope>DISRUPTION PHENOTYPE</scope>
    <source>
        <strain>SL1344</strain>
    </source>
</reference>
<reference key="5">
    <citation type="journal article" date="2007" name="Cell. Microbiol.">
        <title>SopD acts cooperatively with SopB during Salmonella enterica serovar Typhimurium invasion.</title>
        <authorList>
            <person name="Bakowski M.A."/>
            <person name="Cirulis J.T."/>
            <person name="Brown N.F."/>
            <person name="Finlay B.B."/>
            <person name="Brumell J.H."/>
        </authorList>
    </citation>
    <scope>FUNCTION</scope>
    <scope>SUBCELLULAR LOCATION</scope>
    <scope>MUTAGENESIS OF TRP-37 AND PHE-44</scope>
    <source>
        <strain>SL1344</strain>
    </source>
</reference>
<gene>
    <name type="primary">sopD</name>
    <name type="ordered locus">STM2945</name>
</gene>
<keyword id="KW-0002">3D-structure</keyword>
<keyword id="KW-1032">Host cell membrane</keyword>
<keyword id="KW-1035">Host cytoplasm</keyword>
<keyword id="KW-1043">Host membrane</keyword>
<keyword id="KW-0472">Membrane</keyword>
<keyword id="KW-1185">Reference proteome</keyword>
<keyword id="KW-0964">Secreted</keyword>
<keyword id="KW-0843">Virulence</keyword>
<comment type="function">
    <text evidence="1 2">Effector proteins function to alter host cell physiology and promote bacterial survival in host tissues. Contributes to replication in macrophages. Plays a role, cooperatively with SopB, in membrane fission and macropinosome formation during invasion.</text>
</comment>
<comment type="subcellular location">
    <subcellularLocation>
        <location>Secreted</location>
    </subcellularLocation>
    <subcellularLocation>
        <location>Host cytoplasm</location>
    </subcellularLocation>
    <subcellularLocation>
        <location>Host cell membrane</location>
    </subcellularLocation>
    <text evidence="3">Secreted via type III secretion systems 1 and 2 (SPI-1 and SPI-2 T3SS), and delivered into the host cell (Probable). Membrane-associated in transfected cells. Recruited to the bacterial invasion site, and this recruitment requires the phosphatase activity of SopB.</text>
</comment>
<comment type="disruption phenotype">
    <text evidence="1">Deletion of this gene impairs bacterial replication in mouse macrophages but not in human epithelial cells.</text>
</comment>
<comment type="similarity">
    <text evidence="3">Belongs to the SopD family.</text>
</comment>
<feature type="chain" id="PRO_0000072040" description="Secreted effector protein SopD">
    <location>
        <begin position="1"/>
        <end position="317"/>
    </location>
</feature>
<feature type="mutagenesis site" description="Localizes almost exclusively to the cytosol of transfected cells." evidence="2">
    <original>W</original>
    <variation>A</variation>
    <location>
        <position position="37"/>
    </location>
</feature>
<feature type="mutagenesis site" description="Localizes almost exclusively to the cytosol of transfected cells." evidence="2">
    <original>F</original>
    <variation>A</variation>
    <location>
        <position position="44"/>
    </location>
</feature>
<feature type="sequence conflict" description="In Ref. 1; AAA27049." evidence="3" ref="1">
    <original>M</original>
    <variation>V</variation>
    <location>
        <position position="214"/>
    </location>
</feature>
<feature type="helix" evidence="4">
    <location>
        <begin position="34"/>
        <end position="36"/>
    </location>
</feature>
<feature type="helix" evidence="4">
    <location>
        <begin position="37"/>
        <end position="40"/>
    </location>
</feature>
<feature type="helix" evidence="4">
    <location>
        <begin position="41"/>
        <end position="43"/>
    </location>
</feature>
<feature type="helix" evidence="4">
    <location>
        <begin position="46"/>
        <end position="48"/>
    </location>
</feature>
<feature type="helix" evidence="4">
    <location>
        <begin position="49"/>
        <end position="60"/>
    </location>
</feature>
<feature type="helix" evidence="4">
    <location>
        <begin position="76"/>
        <end position="90"/>
    </location>
</feature>
<feature type="helix" evidence="4">
    <location>
        <begin position="93"/>
        <end position="98"/>
    </location>
</feature>
<feature type="strand" evidence="4">
    <location>
        <begin position="99"/>
        <end position="103"/>
    </location>
</feature>
<feature type="strand" evidence="4">
    <location>
        <begin position="109"/>
        <end position="114"/>
    </location>
</feature>
<feature type="strand" evidence="4">
    <location>
        <begin position="117"/>
        <end position="123"/>
    </location>
</feature>
<feature type="helix" evidence="4">
    <location>
        <begin position="124"/>
        <end position="127"/>
    </location>
</feature>
<feature type="helix" evidence="4">
    <location>
        <begin position="141"/>
        <end position="160"/>
    </location>
</feature>
<feature type="helix" evidence="4">
    <location>
        <begin position="163"/>
        <end position="167"/>
    </location>
</feature>
<feature type="helix" evidence="4">
    <location>
        <begin position="169"/>
        <end position="177"/>
    </location>
</feature>
<feature type="helix" evidence="4">
    <location>
        <begin position="180"/>
        <end position="190"/>
    </location>
</feature>
<feature type="helix" evidence="4">
    <location>
        <begin position="209"/>
        <end position="215"/>
    </location>
</feature>
<feature type="helix" evidence="4">
    <location>
        <begin position="216"/>
        <end position="219"/>
    </location>
</feature>
<feature type="turn" evidence="4">
    <location>
        <begin position="225"/>
        <end position="231"/>
    </location>
</feature>
<feature type="strand" evidence="4">
    <location>
        <begin position="232"/>
        <end position="237"/>
    </location>
</feature>
<feature type="strand" evidence="4">
    <location>
        <begin position="240"/>
        <end position="245"/>
    </location>
</feature>
<feature type="helix" evidence="4">
    <location>
        <begin position="248"/>
        <end position="255"/>
    </location>
</feature>
<feature type="helix" evidence="5">
    <location>
        <begin position="261"/>
        <end position="263"/>
    </location>
</feature>
<feature type="helix" evidence="4">
    <location>
        <begin position="264"/>
        <end position="283"/>
    </location>
</feature>
<feature type="helix" evidence="4">
    <location>
        <begin position="285"/>
        <end position="298"/>
    </location>
</feature>
<feature type="strand" evidence="4">
    <location>
        <begin position="305"/>
        <end position="307"/>
    </location>
</feature>
<sequence length="317" mass="36141">MPVTLSFGNHQNYTLNESRLAHLLSADKEKAIHMGGWDKVQDHFRAEKKDHALEVLHSIIHGQGRGEPGEMEVNVEDINKIYAFKRLQHLACPAHQDLFTIKMDASQTQFLLMVGDTVISQSNIKDILNISDDAVIESMSREERQLFLQICEVIGSKMTWHPELLQESISTLRKEVTGNAQIKTAVYEMMRPAEAPDHPLVEWQDSLTADEKSMLACINAGNFEPTTQFCKIGYQEVQGEVAFSMMHPCISYLLHSYSPFSEFKPTNSGFLKKLNQDYNDYHAKKMFIDVILEKLYLTHERSLHIGKDGCSRNILLT</sequence>